<organism>
    <name type="scientific">Saccharomyces cerevisiae (strain YJM789)</name>
    <name type="common">Baker's yeast</name>
    <dbReference type="NCBI Taxonomy" id="307796"/>
    <lineage>
        <taxon>Eukaryota</taxon>
        <taxon>Fungi</taxon>
        <taxon>Dikarya</taxon>
        <taxon>Ascomycota</taxon>
        <taxon>Saccharomycotina</taxon>
        <taxon>Saccharomycetes</taxon>
        <taxon>Saccharomycetales</taxon>
        <taxon>Saccharomycetaceae</taxon>
        <taxon>Saccharomyces</taxon>
    </lineage>
</organism>
<gene>
    <name type="primary">RGI1</name>
    <name type="ORF">SCY_1568</name>
</gene>
<evidence type="ECO:0000250" key="1"/>
<evidence type="ECO:0000250" key="2">
    <source>
        <dbReference type="UniProtKB" id="P40043"/>
    </source>
</evidence>
<evidence type="ECO:0000305" key="3"/>
<protein>
    <recommendedName>
        <fullName>Respiratory growth induced protein 1</fullName>
    </recommendedName>
</protein>
<name>RGI1_YEAS7</name>
<dbReference type="EMBL" id="AAFW02000048">
    <property type="protein sequence ID" value="EDN63041.1"/>
    <property type="molecule type" value="Genomic_DNA"/>
</dbReference>
<dbReference type="SMR" id="A6ZR21"/>
<dbReference type="HOGENOM" id="CLU_118207_0_0_1"/>
<dbReference type="Proteomes" id="UP000007060">
    <property type="component" value="Unassembled WGS sequence"/>
</dbReference>
<dbReference type="GO" id="GO:0005886">
    <property type="term" value="C:plasma membrane"/>
    <property type="evidence" value="ECO:0007669"/>
    <property type="project" value="UniProtKB-SubCell"/>
</dbReference>
<dbReference type="GO" id="GO:0006112">
    <property type="term" value="P:energy reserve metabolic process"/>
    <property type="evidence" value="ECO:0007669"/>
    <property type="project" value="InterPro"/>
</dbReference>
<dbReference type="FunFam" id="3.40.1000.40:FF:000001">
    <property type="entry name" value="Respiratory growth induced protein 2"/>
    <property type="match status" value="1"/>
</dbReference>
<dbReference type="Gene3D" id="3.40.1000.40">
    <property type="entry name" value="Respiratory growth induced protein 1"/>
    <property type="match status" value="1"/>
</dbReference>
<dbReference type="InterPro" id="IPR022554">
    <property type="entry name" value="RGI1"/>
</dbReference>
<dbReference type="InterPro" id="IPR038235">
    <property type="entry name" value="RGI1_sf"/>
</dbReference>
<dbReference type="Pfam" id="PF10843">
    <property type="entry name" value="RGI1"/>
    <property type="match status" value="1"/>
</dbReference>
<proteinExistence type="inferred from homology"/>
<comment type="function">
    <text evidence="1">Involved in the control of energetic metabolism and significantly contribute to cell fitness, especially under respiratory growth conditions.</text>
</comment>
<comment type="subcellular location">
    <subcellularLocation>
        <location evidence="1">Cell membrane</location>
        <topology evidence="1">Peripheral membrane protein</topology>
    </subcellularLocation>
</comment>
<comment type="similarity">
    <text evidence="3">Belongs to the RGI1 family.</text>
</comment>
<feature type="chain" id="PRO_0000402295" description="Respiratory growth induced protein 1">
    <location>
        <begin position="1"/>
        <end position="161"/>
    </location>
</feature>
<feature type="cross-link" description="Glycyl lysine isopeptide (Lys-Gly) (interchain with G-Cter in ubiquitin)" evidence="2">
    <location>
        <position position="68"/>
    </location>
</feature>
<sequence length="161" mass="18989">MTKKDKKEVKVQTVTTEDGETVKVFEDLQGFETFIANETEDDDFDHLHCKLNYYPPFVLHESHEDPEKISDAANSHSKKFVRHLHQHIEKHLLKDIKQAVRKPELKFHEKSKEETFDKITWHYGEETEYHGRPFKIDVQVVCTHEDAMVFVDYKTHPVGAN</sequence>
<reference key="1">
    <citation type="journal article" date="2007" name="Proc. Natl. Acad. Sci. U.S.A.">
        <title>Genome sequencing and comparative analysis of Saccharomyces cerevisiae strain YJM789.</title>
        <authorList>
            <person name="Wei W."/>
            <person name="McCusker J.H."/>
            <person name="Hyman R.W."/>
            <person name="Jones T."/>
            <person name="Ning Y."/>
            <person name="Cao Z."/>
            <person name="Gu Z."/>
            <person name="Bruno D."/>
            <person name="Miranda M."/>
            <person name="Nguyen M."/>
            <person name="Wilhelmy J."/>
            <person name="Komp C."/>
            <person name="Tamse R."/>
            <person name="Wang X."/>
            <person name="Jia P."/>
            <person name="Luedi P."/>
            <person name="Oefner P.J."/>
            <person name="David L."/>
            <person name="Dietrich F.S."/>
            <person name="Li Y."/>
            <person name="Davis R.W."/>
            <person name="Steinmetz L.M."/>
        </authorList>
    </citation>
    <scope>NUCLEOTIDE SEQUENCE [LARGE SCALE GENOMIC DNA]</scope>
    <source>
        <strain>YJM789</strain>
    </source>
</reference>
<accession>A6ZR21</accession>
<keyword id="KW-1003">Cell membrane</keyword>
<keyword id="KW-1017">Isopeptide bond</keyword>
<keyword id="KW-0472">Membrane</keyword>
<keyword id="KW-0832">Ubl conjugation</keyword>